<dbReference type="EC" id="3.1.1.29" evidence="1"/>
<dbReference type="EMBL" id="CP001043">
    <property type="protein sequence ID" value="ACC69506.1"/>
    <property type="molecule type" value="Genomic_DNA"/>
</dbReference>
<dbReference type="RefSeq" id="WP_012399733.1">
    <property type="nucleotide sequence ID" value="NC_010622.1"/>
</dbReference>
<dbReference type="SMR" id="B2JCN7"/>
<dbReference type="STRING" id="391038.Bphy_0313"/>
<dbReference type="KEGG" id="bph:Bphy_0313"/>
<dbReference type="eggNOG" id="COG0193">
    <property type="taxonomic scope" value="Bacteria"/>
</dbReference>
<dbReference type="HOGENOM" id="CLU_062456_3_1_4"/>
<dbReference type="OrthoDB" id="9800507at2"/>
<dbReference type="Proteomes" id="UP000001192">
    <property type="component" value="Chromosome 1"/>
</dbReference>
<dbReference type="GO" id="GO:0005737">
    <property type="term" value="C:cytoplasm"/>
    <property type="evidence" value="ECO:0007669"/>
    <property type="project" value="UniProtKB-SubCell"/>
</dbReference>
<dbReference type="GO" id="GO:0004045">
    <property type="term" value="F:peptidyl-tRNA hydrolase activity"/>
    <property type="evidence" value="ECO:0007669"/>
    <property type="project" value="UniProtKB-UniRule"/>
</dbReference>
<dbReference type="GO" id="GO:0000049">
    <property type="term" value="F:tRNA binding"/>
    <property type="evidence" value="ECO:0007669"/>
    <property type="project" value="UniProtKB-UniRule"/>
</dbReference>
<dbReference type="GO" id="GO:0006515">
    <property type="term" value="P:protein quality control for misfolded or incompletely synthesized proteins"/>
    <property type="evidence" value="ECO:0007669"/>
    <property type="project" value="UniProtKB-UniRule"/>
</dbReference>
<dbReference type="GO" id="GO:0072344">
    <property type="term" value="P:rescue of stalled ribosome"/>
    <property type="evidence" value="ECO:0007669"/>
    <property type="project" value="UniProtKB-UniRule"/>
</dbReference>
<dbReference type="CDD" id="cd00462">
    <property type="entry name" value="PTH"/>
    <property type="match status" value="1"/>
</dbReference>
<dbReference type="FunFam" id="3.40.50.1470:FF:000001">
    <property type="entry name" value="Peptidyl-tRNA hydrolase"/>
    <property type="match status" value="1"/>
</dbReference>
<dbReference type="Gene3D" id="3.40.50.1470">
    <property type="entry name" value="Peptidyl-tRNA hydrolase"/>
    <property type="match status" value="1"/>
</dbReference>
<dbReference type="HAMAP" id="MF_00083">
    <property type="entry name" value="Pept_tRNA_hydro_bact"/>
    <property type="match status" value="1"/>
</dbReference>
<dbReference type="InterPro" id="IPR001328">
    <property type="entry name" value="Pept_tRNA_hydro"/>
</dbReference>
<dbReference type="InterPro" id="IPR018171">
    <property type="entry name" value="Pept_tRNA_hydro_CS"/>
</dbReference>
<dbReference type="InterPro" id="IPR036416">
    <property type="entry name" value="Pept_tRNA_hydro_sf"/>
</dbReference>
<dbReference type="NCBIfam" id="TIGR00447">
    <property type="entry name" value="pth"/>
    <property type="match status" value="1"/>
</dbReference>
<dbReference type="PANTHER" id="PTHR17224">
    <property type="entry name" value="PEPTIDYL-TRNA HYDROLASE"/>
    <property type="match status" value="1"/>
</dbReference>
<dbReference type="PANTHER" id="PTHR17224:SF1">
    <property type="entry name" value="PEPTIDYL-TRNA HYDROLASE"/>
    <property type="match status" value="1"/>
</dbReference>
<dbReference type="Pfam" id="PF01195">
    <property type="entry name" value="Pept_tRNA_hydro"/>
    <property type="match status" value="1"/>
</dbReference>
<dbReference type="SUPFAM" id="SSF53178">
    <property type="entry name" value="Peptidyl-tRNA hydrolase-like"/>
    <property type="match status" value="1"/>
</dbReference>
<dbReference type="PROSITE" id="PS01195">
    <property type="entry name" value="PEPT_TRNA_HYDROL_1"/>
    <property type="match status" value="1"/>
</dbReference>
<dbReference type="PROSITE" id="PS01196">
    <property type="entry name" value="PEPT_TRNA_HYDROL_2"/>
    <property type="match status" value="1"/>
</dbReference>
<evidence type="ECO:0000255" key="1">
    <source>
        <dbReference type="HAMAP-Rule" id="MF_00083"/>
    </source>
</evidence>
<name>PTH_PARP8</name>
<comment type="function">
    <text evidence="1">Hydrolyzes ribosome-free peptidyl-tRNAs (with 1 or more amino acids incorporated), which drop off the ribosome during protein synthesis, or as a result of ribosome stalling.</text>
</comment>
<comment type="function">
    <text evidence="1">Catalyzes the release of premature peptidyl moieties from peptidyl-tRNA molecules trapped in stalled 50S ribosomal subunits, and thus maintains levels of free tRNAs and 50S ribosomes.</text>
</comment>
<comment type="catalytic activity">
    <reaction evidence="1">
        <text>an N-acyl-L-alpha-aminoacyl-tRNA + H2O = an N-acyl-L-amino acid + a tRNA + H(+)</text>
        <dbReference type="Rhea" id="RHEA:54448"/>
        <dbReference type="Rhea" id="RHEA-COMP:10123"/>
        <dbReference type="Rhea" id="RHEA-COMP:13883"/>
        <dbReference type="ChEBI" id="CHEBI:15377"/>
        <dbReference type="ChEBI" id="CHEBI:15378"/>
        <dbReference type="ChEBI" id="CHEBI:59874"/>
        <dbReference type="ChEBI" id="CHEBI:78442"/>
        <dbReference type="ChEBI" id="CHEBI:138191"/>
        <dbReference type="EC" id="3.1.1.29"/>
    </reaction>
</comment>
<comment type="subunit">
    <text evidence="1">Monomer.</text>
</comment>
<comment type="subcellular location">
    <subcellularLocation>
        <location evidence="1">Cytoplasm</location>
    </subcellularLocation>
</comment>
<comment type="similarity">
    <text evidence="1">Belongs to the PTH family.</text>
</comment>
<reference key="1">
    <citation type="journal article" date="2014" name="Stand. Genomic Sci.">
        <title>Complete genome sequence of Burkholderia phymatum STM815(T), a broad host range and efficient nitrogen-fixing symbiont of Mimosa species.</title>
        <authorList>
            <person name="Moulin L."/>
            <person name="Klonowska A."/>
            <person name="Caroline B."/>
            <person name="Booth K."/>
            <person name="Vriezen J.A."/>
            <person name="Melkonian R."/>
            <person name="James E.K."/>
            <person name="Young J.P."/>
            <person name="Bena G."/>
            <person name="Hauser L."/>
            <person name="Land M."/>
            <person name="Kyrpides N."/>
            <person name="Bruce D."/>
            <person name="Chain P."/>
            <person name="Copeland A."/>
            <person name="Pitluck S."/>
            <person name="Woyke T."/>
            <person name="Lizotte-Waniewski M."/>
            <person name="Bristow J."/>
            <person name="Riley M."/>
        </authorList>
    </citation>
    <scope>NUCLEOTIDE SEQUENCE [LARGE SCALE GENOMIC DNA]</scope>
    <source>
        <strain>DSM 17167 / CIP 108236 / LMG 21445 / STM815</strain>
    </source>
</reference>
<sequence>MIKLIVGLGNPGAEYTATRHNAGFWLIDQLAREAGTTLRDERRFHGFYAKARLYGEEVHLLEPMTYMNRSGQSVVALAHFFKILPDQILVAHDELDLPPGTVKLKLGGGSGGHNGLKDISAHLSTQQYWRLRIGIGHPRDLIPDSARAGAKPDVANFVLKPPRKEEQDLIDASIERALAVMPVVVKGELERAMMQLHRNP</sequence>
<organism>
    <name type="scientific">Paraburkholderia phymatum (strain DSM 17167 / CIP 108236 / LMG 21445 / STM815)</name>
    <name type="common">Burkholderia phymatum</name>
    <dbReference type="NCBI Taxonomy" id="391038"/>
    <lineage>
        <taxon>Bacteria</taxon>
        <taxon>Pseudomonadati</taxon>
        <taxon>Pseudomonadota</taxon>
        <taxon>Betaproteobacteria</taxon>
        <taxon>Burkholderiales</taxon>
        <taxon>Burkholderiaceae</taxon>
        <taxon>Paraburkholderia</taxon>
    </lineage>
</organism>
<proteinExistence type="inferred from homology"/>
<keyword id="KW-0963">Cytoplasm</keyword>
<keyword id="KW-0378">Hydrolase</keyword>
<keyword id="KW-1185">Reference proteome</keyword>
<keyword id="KW-0694">RNA-binding</keyword>
<keyword id="KW-0820">tRNA-binding</keyword>
<accession>B2JCN7</accession>
<feature type="chain" id="PRO_1000092920" description="Peptidyl-tRNA hydrolase">
    <location>
        <begin position="1"/>
        <end position="200"/>
    </location>
</feature>
<feature type="active site" description="Proton acceptor" evidence="1">
    <location>
        <position position="20"/>
    </location>
</feature>
<feature type="binding site" evidence="1">
    <location>
        <position position="15"/>
    </location>
    <ligand>
        <name>tRNA</name>
        <dbReference type="ChEBI" id="CHEBI:17843"/>
    </ligand>
</feature>
<feature type="binding site" evidence="1">
    <location>
        <position position="66"/>
    </location>
    <ligand>
        <name>tRNA</name>
        <dbReference type="ChEBI" id="CHEBI:17843"/>
    </ligand>
</feature>
<feature type="binding site" evidence="1">
    <location>
        <position position="68"/>
    </location>
    <ligand>
        <name>tRNA</name>
        <dbReference type="ChEBI" id="CHEBI:17843"/>
    </ligand>
</feature>
<feature type="binding site" evidence="1">
    <location>
        <position position="114"/>
    </location>
    <ligand>
        <name>tRNA</name>
        <dbReference type="ChEBI" id="CHEBI:17843"/>
    </ligand>
</feature>
<feature type="site" description="Discriminates between blocked and unblocked aminoacyl-tRNA" evidence="1">
    <location>
        <position position="10"/>
    </location>
</feature>
<feature type="site" description="Stabilizes the basic form of H active site to accept a proton" evidence="1">
    <location>
        <position position="93"/>
    </location>
</feature>
<gene>
    <name evidence="1" type="primary">pth</name>
    <name type="ordered locus">Bphy_0313</name>
</gene>
<protein>
    <recommendedName>
        <fullName evidence="1">Peptidyl-tRNA hydrolase</fullName>
        <shortName evidence="1">Pth</shortName>
        <ecNumber evidence="1">3.1.1.29</ecNumber>
    </recommendedName>
</protein>